<dbReference type="EMBL" id="AY160104">
    <property type="protein sequence ID" value="AAN46884.1"/>
    <property type="molecule type" value="Genomic_DNA"/>
</dbReference>
<dbReference type="EMBL" id="AAFI02000162">
    <property type="protein sequence ID" value="EAL62260.1"/>
    <property type="molecule type" value="Genomic_DNA"/>
</dbReference>
<dbReference type="RefSeq" id="XP_635769.1">
    <property type="nucleotide sequence ID" value="XM_630677.1"/>
</dbReference>
<dbReference type="SMR" id="Q8IS11"/>
<dbReference type="FunCoup" id="Q8IS11">
    <property type="interactions" value="37"/>
</dbReference>
<dbReference type="PaxDb" id="44689-DDB0191357"/>
<dbReference type="EnsemblProtists" id="EAL62260">
    <property type="protein sequence ID" value="EAL62260"/>
    <property type="gene ID" value="DDB_G0290267"/>
</dbReference>
<dbReference type="GeneID" id="8627573"/>
<dbReference type="KEGG" id="ddi:DDB_G0290267"/>
<dbReference type="dictyBase" id="DDB_G0290267">
    <property type="gene designation" value="gefO"/>
</dbReference>
<dbReference type="VEuPathDB" id="AmoebaDB:DDB_G0290267"/>
<dbReference type="eggNOG" id="KOG3417">
    <property type="taxonomic scope" value="Eukaryota"/>
</dbReference>
<dbReference type="HOGENOM" id="CLU_311340_0_0_1"/>
<dbReference type="InParanoid" id="Q8IS11"/>
<dbReference type="OMA" id="NIWDEPK"/>
<dbReference type="Reactome" id="R-DDI-193648">
    <property type="pathway name" value="NRAGE signals death through JNK"/>
</dbReference>
<dbReference type="Reactome" id="R-DDI-9013148">
    <property type="pathway name" value="CDC42 GTPase cycle"/>
</dbReference>
<dbReference type="Reactome" id="R-DDI-9013149">
    <property type="pathway name" value="RAC1 GTPase cycle"/>
</dbReference>
<dbReference type="PRO" id="PR:Q8IS11"/>
<dbReference type="Proteomes" id="UP000002195">
    <property type="component" value="Chromosome 5"/>
</dbReference>
<dbReference type="GO" id="GO:0005886">
    <property type="term" value="C:plasma membrane"/>
    <property type="evidence" value="ECO:0000318"/>
    <property type="project" value="GO_Central"/>
</dbReference>
<dbReference type="GO" id="GO:0005085">
    <property type="term" value="F:guanyl-nucleotide exchange factor activity"/>
    <property type="evidence" value="ECO:0000318"/>
    <property type="project" value="GO_Central"/>
</dbReference>
<dbReference type="GO" id="GO:0008270">
    <property type="term" value="F:zinc ion binding"/>
    <property type="evidence" value="ECO:0007669"/>
    <property type="project" value="UniProtKB-KW"/>
</dbReference>
<dbReference type="GO" id="GO:0007265">
    <property type="term" value="P:Ras protein signal transduction"/>
    <property type="evidence" value="ECO:0000318"/>
    <property type="project" value="GO_Central"/>
</dbReference>
<dbReference type="CDD" id="cd20207">
    <property type="entry name" value="Bbox2_GefO-like"/>
    <property type="match status" value="1"/>
</dbReference>
<dbReference type="CDD" id="cd00155">
    <property type="entry name" value="RasGEF"/>
    <property type="match status" value="1"/>
</dbReference>
<dbReference type="CDD" id="cd06224">
    <property type="entry name" value="REM"/>
    <property type="match status" value="1"/>
</dbReference>
<dbReference type="Gene3D" id="3.30.160.60">
    <property type="entry name" value="Classic Zinc Finger"/>
    <property type="match status" value="1"/>
</dbReference>
<dbReference type="Gene3D" id="1.10.840.10">
    <property type="entry name" value="Ras guanine-nucleotide exchange factors catalytic domain"/>
    <property type="match status" value="1"/>
</dbReference>
<dbReference type="Gene3D" id="1.20.870.10">
    <property type="entry name" value="Son of sevenless (SoS) protein Chain: S domain 1"/>
    <property type="match status" value="1"/>
</dbReference>
<dbReference type="Gene3D" id="3.30.40.10">
    <property type="entry name" value="Zinc/RING finger domain, C3HC4 (zinc finger)"/>
    <property type="match status" value="1"/>
</dbReference>
<dbReference type="InterPro" id="IPR008937">
    <property type="entry name" value="Ras-like_GEF"/>
</dbReference>
<dbReference type="InterPro" id="IPR000651">
    <property type="entry name" value="Ras-like_Gua-exchang_fac_N"/>
</dbReference>
<dbReference type="InterPro" id="IPR023578">
    <property type="entry name" value="Ras_GEF_dom_sf"/>
</dbReference>
<dbReference type="InterPro" id="IPR001895">
    <property type="entry name" value="RASGEF_cat_dom"/>
</dbReference>
<dbReference type="InterPro" id="IPR036964">
    <property type="entry name" value="RASGEF_cat_dom_sf"/>
</dbReference>
<dbReference type="InterPro" id="IPR027370">
    <property type="entry name" value="Znf-RING_euk"/>
</dbReference>
<dbReference type="InterPro" id="IPR000315">
    <property type="entry name" value="Znf_B-box"/>
</dbReference>
<dbReference type="InterPro" id="IPR001841">
    <property type="entry name" value="Znf_RING"/>
</dbReference>
<dbReference type="InterPro" id="IPR013083">
    <property type="entry name" value="Znf_RING/FYVE/PHD"/>
</dbReference>
<dbReference type="InterPro" id="IPR017907">
    <property type="entry name" value="Znf_RING_CS"/>
</dbReference>
<dbReference type="PANTHER" id="PTHR23113">
    <property type="entry name" value="GUANINE NUCLEOTIDE EXCHANGE FACTOR"/>
    <property type="match status" value="1"/>
</dbReference>
<dbReference type="PANTHER" id="PTHR23113:SF347">
    <property type="entry name" value="RAS GUANINE NUCLEOTIDE EXCHANGE FACTOR O"/>
    <property type="match status" value="1"/>
</dbReference>
<dbReference type="Pfam" id="PF00617">
    <property type="entry name" value="RasGEF"/>
    <property type="match status" value="1"/>
</dbReference>
<dbReference type="Pfam" id="PF00618">
    <property type="entry name" value="RasGEF_N"/>
    <property type="match status" value="1"/>
</dbReference>
<dbReference type="Pfam" id="PF00643">
    <property type="entry name" value="zf-B_box"/>
    <property type="match status" value="1"/>
</dbReference>
<dbReference type="Pfam" id="PF13445">
    <property type="entry name" value="zf-RING_UBOX"/>
    <property type="match status" value="1"/>
</dbReference>
<dbReference type="SMART" id="SM00147">
    <property type="entry name" value="RasGEF"/>
    <property type="match status" value="1"/>
</dbReference>
<dbReference type="SMART" id="SM00229">
    <property type="entry name" value="RasGEFN"/>
    <property type="match status" value="1"/>
</dbReference>
<dbReference type="SMART" id="SM00184">
    <property type="entry name" value="RING"/>
    <property type="match status" value="1"/>
</dbReference>
<dbReference type="SUPFAM" id="SSF57845">
    <property type="entry name" value="B-box zinc-binding domain"/>
    <property type="match status" value="1"/>
</dbReference>
<dbReference type="SUPFAM" id="SSF48366">
    <property type="entry name" value="Ras GEF"/>
    <property type="match status" value="1"/>
</dbReference>
<dbReference type="SUPFAM" id="SSF57850">
    <property type="entry name" value="RING/U-box"/>
    <property type="match status" value="1"/>
</dbReference>
<dbReference type="PROSITE" id="PS50009">
    <property type="entry name" value="RASGEF_CAT"/>
    <property type="match status" value="1"/>
</dbReference>
<dbReference type="PROSITE" id="PS50212">
    <property type="entry name" value="RASGEF_NTER"/>
    <property type="match status" value="1"/>
</dbReference>
<dbReference type="PROSITE" id="PS50119">
    <property type="entry name" value="ZF_BBOX"/>
    <property type="match status" value="1"/>
</dbReference>
<dbReference type="PROSITE" id="PS00518">
    <property type="entry name" value="ZF_RING_1"/>
    <property type="match status" value="1"/>
</dbReference>
<dbReference type="PROSITE" id="PS50089">
    <property type="entry name" value="ZF_RING_2"/>
    <property type="match status" value="1"/>
</dbReference>
<feature type="chain" id="PRO_0000384473" description="Ras guanine nucleotide exchange factor O">
    <location>
        <begin position="1"/>
        <end position="944"/>
    </location>
</feature>
<feature type="domain" description="N-terminal Ras-GEF" evidence="4">
    <location>
        <begin position="402"/>
        <end position="528"/>
    </location>
</feature>
<feature type="domain" description="Ras-GEF" evidence="5">
    <location>
        <begin position="727"/>
        <end position="944"/>
    </location>
</feature>
<feature type="zinc finger region" description="RING-type" evidence="6">
    <location>
        <begin position="16"/>
        <end position="54"/>
    </location>
</feature>
<feature type="zinc finger region" description="B box-type" evidence="3">
    <location>
        <begin position="152"/>
        <end position="192"/>
    </location>
</feature>
<feature type="region of interest" description="Disordered" evidence="7">
    <location>
        <begin position="80"/>
        <end position="102"/>
    </location>
</feature>
<feature type="region of interest" description="Disordered" evidence="7">
    <location>
        <begin position="530"/>
        <end position="562"/>
    </location>
</feature>
<feature type="region of interest" description="Disordered" evidence="7">
    <location>
        <begin position="587"/>
        <end position="623"/>
    </location>
</feature>
<feature type="region of interest" description="Disordered" evidence="7">
    <location>
        <begin position="644"/>
        <end position="670"/>
    </location>
</feature>
<feature type="coiled-coil region" evidence="2">
    <location>
        <begin position="200"/>
        <end position="234"/>
    </location>
</feature>
<feature type="coiled-coil region" evidence="2">
    <location>
        <begin position="271"/>
        <end position="303"/>
    </location>
</feature>
<feature type="compositionally biased region" description="Polar residues" evidence="7">
    <location>
        <begin position="590"/>
        <end position="604"/>
    </location>
</feature>
<feature type="compositionally biased region" description="Low complexity" evidence="7">
    <location>
        <begin position="605"/>
        <end position="623"/>
    </location>
</feature>
<feature type="compositionally biased region" description="Low complexity" evidence="7">
    <location>
        <begin position="648"/>
        <end position="670"/>
    </location>
</feature>
<feature type="binding site" evidence="3">
    <location>
        <position position="157"/>
    </location>
    <ligand>
        <name>Zn(2+)</name>
        <dbReference type="ChEBI" id="CHEBI:29105"/>
    </ligand>
</feature>
<feature type="binding site" evidence="3">
    <location>
        <position position="160"/>
    </location>
    <ligand>
        <name>Zn(2+)</name>
        <dbReference type="ChEBI" id="CHEBI:29105"/>
    </ligand>
</feature>
<feature type="binding site" evidence="3">
    <location>
        <position position="179"/>
    </location>
    <ligand>
        <name>Zn(2+)</name>
        <dbReference type="ChEBI" id="CHEBI:29105"/>
    </ligand>
</feature>
<feature type="binding site" evidence="3">
    <location>
        <position position="184"/>
    </location>
    <ligand>
        <name>Zn(2+)</name>
        <dbReference type="ChEBI" id="CHEBI:29105"/>
    </ligand>
</feature>
<proteinExistence type="evidence at transcript level"/>
<sequence>MTTNSKSLNLLQSLTCGICQNLFKDPNTLIPCGHAFCLDCLTTNASIKNCIQCKVEYTTYIPNHPLKQMIDCLDQSSNNNNSNNNSNGENTNNNNNIINNERSSFNGSNSNSIIGFIEGLSDSTSNGRRFSQQDGLRYSSGLLDGSNSGGSNNIRYCMEHYEHYYAFCNDCQAPVCPSCLLTTHNRHGMIPLTKDSIATKMKEYRDIVQSFKTKMSQYKDNITLYQKEIELLDSTFLQCKQSIQLMISNLHKVLKSRETYLLKEISSIHYASHMELTDRSSTLENEISEMEKLIGNGTDKFKDATEILNNQNLKFEFLEQFHHSRTQSKKNQNQDGLKPLFKTDLLFYKANNERVTEMINGTLGNISLLTFPLDDIGEVNIWDEPKENICIEKVRTNSNGIEEFEVKYGSLNKLIERLCLPNCYDDNYVNIFLLTYHSFCSSKKLLKKLIERFTIPEDLEAHGLTLASIHEIHMKIRSVLVKWINEYSPKFDQDTIHLFQNFNCRMQSEYTSIQEIENLLLNSNENSPSITSSQSLSSQSLYSQTNNNNNNNNNNSNNLQPTIQTNQTLSSNINNITISNLNNSNLTNNGTCKIQNSPPKNYQQSNYSSIFNGPSSSSSSSPSSPILSLNSLALINGNDNLVFESPLNSPRNNNNNNNNNSPRSSSFGASSALKFNSNNNSLNINSNMGGPYFPSPSSPTTNNIPNINHFSSRILSSSKNLEFNDIDEFEIAKQLTLIEFENFGRIKPIDLLTCVDLKHKTPHITNIMERFHNISTWVSTTIVRGENLKNRVKIVNKFIKIAEHLKNLNNFNSLTAILVAIQRSTVTKKDLVKQSVKIITDLEKLMSSDDSYSTYRTRLAQCSPPCVPYISIYLQDIMDLEKKNPSNIIVQTSSNKTQEFINFTRRSLISKVILDLASYQRFGYSTILPISNIQEYLNVHIDEL</sequence>
<gene>
    <name type="primary">gefO</name>
    <name type="synonym">rasGEFO</name>
    <name type="ORF">DDB_G0290267</name>
</gene>
<accession>Q8IS11</accession>
<accession>Q54GB4</accession>
<organism>
    <name type="scientific">Dictyostelium discoideum</name>
    <name type="common">Social amoeba</name>
    <dbReference type="NCBI Taxonomy" id="44689"/>
    <lineage>
        <taxon>Eukaryota</taxon>
        <taxon>Amoebozoa</taxon>
        <taxon>Evosea</taxon>
        <taxon>Eumycetozoa</taxon>
        <taxon>Dictyostelia</taxon>
        <taxon>Dictyosteliales</taxon>
        <taxon>Dictyosteliaceae</taxon>
        <taxon>Dictyostelium</taxon>
    </lineage>
</organism>
<reference key="1">
    <citation type="journal article" date="2005" name="Genome Biol.">
        <title>The Dictyostelium genome encodes numerous RasGEFs with multiple biological roles.</title>
        <authorList>
            <person name="Wilkins A."/>
            <person name="Szafranski K."/>
            <person name="Fraser D.J."/>
            <person name="Bakthavatsalam D."/>
            <person name="Mueller R."/>
            <person name="Fisher P.R."/>
            <person name="Gloeckner G."/>
            <person name="Eichinger L."/>
            <person name="Noegel A.A."/>
            <person name="Insall R.H."/>
        </authorList>
    </citation>
    <scope>NUCLEOTIDE SEQUENCE [GENOMIC DNA]</scope>
    <scope>DEVELOPMENTAL STAGE</scope>
    <source>
        <strain>AX4</strain>
    </source>
</reference>
<reference key="2">
    <citation type="journal article" date="2005" name="Nature">
        <title>The genome of the social amoeba Dictyostelium discoideum.</title>
        <authorList>
            <person name="Eichinger L."/>
            <person name="Pachebat J.A."/>
            <person name="Gloeckner G."/>
            <person name="Rajandream M.A."/>
            <person name="Sucgang R."/>
            <person name="Berriman M."/>
            <person name="Song J."/>
            <person name="Olsen R."/>
            <person name="Szafranski K."/>
            <person name="Xu Q."/>
            <person name="Tunggal B."/>
            <person name="Kummerfeld S."/>
            <person name="Madera M."/>
            <person name="Konfortov B.A."/>
            <person name="Rivero F."/>
            <person name="Bankier A.T."/>
            <person name="Lehmann R."/>
            <person name="Hamlin N."/>
            <person name="Davies R."/>
            <person name="Gaudet P."/>
            <person name="Fey P."/>
            <person name="Pilcher K."/>
            <person name="Chen G."/>
            <person name="Saunders D."/>
            <person name="Sodergren E.J."/>
            <person name="Davis P."/>
            <person name="Kerhornou A."/>
            <person name="Nie X."/>
            <person name="Hall N."/>
            <person name="Anjard C."/>
            <person name="Hemphill L."/>
            <person name="Bason N."/>
            <person name="Farbrother P."/>
            <person name="Desany B."/>
            <person name="Just E."/>
            <person name="Morio T."/>
            <person name="Rost R."/>
            <person name="Churcher C.M."/>
            <person name="Cooper J."/>
            <person name="Haydock S."/>
            <person name="van Driessche N."/>
            <person name="Cronin A."/>
            <person name="Goodhead I."/>
            <person name="Muzny D.M."/>
            <person name="Mourier T."/>
            <person name="Pain A."/>
            <person name="Lu M."/>
            <person name="Harper D."/>
            <person name="Lindsay R."/>
            <person name="Hauser H."/>
            <person name="James K.D."/>
            <person name="Quiles M."/>
            <person name="Madan Babu M."/>
            <person name="Saito T."/>
            <person name="Buchrieser C."/>
            <person name="Wardroper A."/>
            <person name="Felder M."/>
            <person name="Thangavelu M."/>
            <person name="Johnson D."/>
            <person name="Knights A."/>
            <person name="Loulseged H."/>
            <person name="Mungall K.L."/>
            <person name="Oliver K."/>
            <person name="Price C."/>
            <person name="Quail M.A."/>
            <person name="Urushihara H."/>
            <person name="Hernandez J."/>
            <person name="Rabbinowitsch E."/>
            <person name="Steffen D."/>
            <person name="Sanders M."/>
            <person name="Ma J."/>
            <person name="Kohara Y."/>
            <person name="Sharp S."/>
            <person name="Simmonds M.N."/>
            <person name="Spiegler S."/>
            <person name="Tivey A."/>
            <person name="Sugano S."/>
            <person name="White B."/>
            <person name="Walker D."/>
            <person name="Woodward J.R."/>
            <person name="Winckler T."/>
            <person name="Tanaka Y."/>
            <person name="Shaulsky G."/>
            <person name="Schleicher M."/>
            <person name="Weinstock G.M."/>
            <person name="Rosenthal A."/>
            <person name="Cox E.C."/>
            <person name="Chisholm R.L."/>
            <person name="Gibbs R.A."/>
            <person name="Loomis W.F."/>
            <person name="Platzer M."/>
            <person name="Kay R.R."/>
            <person name="Williams J.G."/>
            <person name="Dear P.H."/>
            <person name="Noegel A.A."/>
            <person name="Barrell B.G."/>
            <person name="Kuspa A."/>
        </authorList>
    </citation>
    <scope>NUCLEOTIDE SEQUENCE [LARGE SCALE GENOMIC DNA]</scope>
    <source>
        <strain>AX4</strain>
    </source>
</reference>
<comment type="function">
    <text evidence="1">Promotes the exchange of Ras-bound GDP by GTP.</text>
</comment>
<comment type="developmental stage">
    <text evidence="8">Faintly expressed during development.</text>
</comment>
<evidence type="ECO:0000250" key="1"/>
<evidence type="ECO:0000255" key="2"/>
<evidence type="ECO:0000255" key="3">
    <source>
        <dbReference type="PROSITE-ProRule" id="PRU00024"/>
    </source>
</evidence>
<evidence type="ECO:0000255" key="4">
    <source>
        <dbReference type="PROSITE-ProRule" id="PRU00135"/>
    </source>
</evidence>
<evidence type="ECO:0000255" key="5">
    <source>
        <dbReference type="PROSITE-ProRule" id="PRU00168"/>
    </source>
</evidence>
<evidence type="ECO:0000255" key="6">
    <source>
        <dbReference type="PROSITE-ProRule" id="PRU00175"/>
    </source>
</evidence>
<evidence type="ECO:0000256" key="7">
    <source>
        <dbReference type="SAM" id="MobiDB-lite"/>
    </source>
</evidence>
<evidence type="ECO:0000269" key="8">
    <source>
    </source>
</evidence>
<protein>
    <recommendedName>
        <fullName>Ras guanine nucleotide exchange factor O</fullName>
    </recommendedName>
    <alternativeName>
        <fullName>RasGEF domain-containing protein O</fullName>
    </alternativeName>
</protein>
<keyword id="KW-0175">Coiled coil</keyword>
<keyword id="KW-0344">Guanine-nucleotide releasing factor</keyword>
<keyword id="KW-0479">Metal-binding</keyword>
<keyword id="KW-1185">Reference proteome</keyword>
<keyword id="KW-0862">Zinc</keyword>
<keyword id="KW-0863">Zinc-finger</keyword>
<name>GEFO_DICDI</name>